<protein>
    <recommendedName>
        <fullName evidence="1">Methylthioribulose-1-phosphate dehydratase</fullName>
        <shortName evidence="1">MTRu-1-P dehydratase</shortName>
        <ecNumber evidence="1">4.2.1.109</ecNumber>
    </recommendedName>
</protein>
<sequence length="225" mass="25161">MNATTAPLPYSAARLHELAHVLIANIRELAHAGWTPATSSNFSHRLDEQHAAITVSGRDKGRLVEEDIMVVDFDCLAVGRPLRPSAETLLHTQLYRRFPEICCVLHTHSPVQTIASRLYAGSDVIRLEGYELLKAFEGNTTHETAVEVPVFANTQDMQVLAAQVDALLDKQSMWGYLIEGHGLYAWGRSMAEARRHLEAFEFLLQCELELLKLRGTRQVVPVPHS</sequence>
<proteinExistence type="inferred from homology"/>
<organism>
    <name type="scientific">Xanthomonas oryzae pv. oryzae (strain MAFF 311018)</name>
    <dbReference type="NCBI Taxonomy" id="342109"/>
    <lineage>
        <taxon>Bacteria</taxon>
        <taxon>Pseudomonadati</taxon>
        <taxon>Pseudomonadota</taxon>
        <taxon>Gammaproteobacteria</taxon>
        <taxon>Lysobacterales</taxon>
        <taxon>Lysobacteraceae</taxon>
        <taxon>Xanthomonas</taxon>
    </lineage>
</organism>
<dbReference type="EC" id="4.2.1.109" evidence="1"/>
<dbReference type="EMBL" id="AP008229">
    <property type="protein sequence ID" value="BAE68763.1"/>
    <property type="molecule type" value="Genomic_DNA"/>
</dbReference>
<dbReference type="RefSeq" id="WP_011408418.1">
    <property type="nucleotide sequence ID" value="NC_007705.1"/>
</dbReference>
<dbReference type="SMR" id="Q2P3W4"/>
<dbReference type="KEGG" id="xom:XOO2008"/>
<dbReference type="HOGENOM" id="CLU_006033_4_1_6"/>
<dbReference type="UniPathway" id="UPA00904">
    <property type="reaction ID" value="UER00875"/>
</dbReference>
<dbReference type="GO" id="GO:0005737">
    <property type="term" value="C:cytoplasm"/>
    <property type="evidence" value="ECO:0007669"/>
    <property type="project" value="InterPro"/>
</dbReference>
<dbReference type="GO" id="GO:0046570">
    <property type="term" value="F:methylthioribulose 1-phosphate dehydratase activity"/>
    <property type="evidence" value="ECO:0007669"/>
    <property type="project" value="UniProtKB-UniRule"/>
</dbReference>
<dbReference type="GO" id="GO:0008270">
    <property type="term" value="F:zinc ion binding"/>
    <property type="evidence" value="ECO:0007669"/>
    <property type="project" value="UniProtKB-UniRule"/>
</dbReference>
<dbReference type="GO" id="GO:0019509">
    <property type="term" value="P:L-methionine salvage from methylthioadenosine"/>
    <property type="evidence" value="ECO:0007669"/>
    <property type="project" value="UniProtKB-UniRule"/>
</dbReference>
<dbReference type="GO" id="GO:0005996">
    <property type="term" value="P:monosaccharide metabolic process"/>
    <property type="evidence" value="ECO:0007669"/>
    <property type="project" value="UniProtKB-ARBA"/>
</dbReference>
<dbReference type="FunFam" id="3.40.225.10:FF:000007">
    <property type="entry name" value="Methylthioribulose-1-phosphate dehydratase"/>
    <property type="match status" value="1"/>
</dbReference>
<dbReference type="Gene3D" id="3.40.225.10">
    <property type="entry name" value="Class II aldolase/adducin N-terminal domain"/>
    <property type="match status" value="1"/>
</dbReference>
<dbReference type="HAMAP" id="MF_01677">
    <property type="entry name" value="Salvage_MtnB"/>
    <property type="match status" value="1"/>
</dbReference>
<dbReference type="InterPro" id="IPR001303">
    <property type="entry name" value="Aldolase_II/adducin_N"/>
</dbReference>
<dbReference type="InterPro" id="IPR036409">
    <property type="entry name" value="Aldolase_II/adducin_N_sf"/>
</dbReference>
<dbReference type="InterPro" id="IPR017714">
    <property type="entry name" value="MethylthioRu-1-P_deHdtase_MtnB"/>
</dbReference>
<dbReference type="NCBIfam" id="NF006672">
    <property type="entry name" value="PRK09220.1"/>
    <property type="match status" value="1"/>
</dbReference>
<dbReference type="NCBIfam" id="TIGR03328">
    <property type="entry name" value="salvage_mtnB"/>
    <property type="match status" value="1"/>
</dbReference>
<dbReference type="PANTHER" id="PTHR10640">
    <property type="entry name" value="METHYLTHIORIBULOSE-1-PHOSPHATE DEHYDRATASE"/>
    <property type="match status" value="1"/>
</dbReference>
<dbReference type="PANTHER" id="PTHR10640:SF7">
    <property type="entry name" value="METHYLTHIORIBULOSE-1-PHOSPHATE DEHYDRATASE"/>
    <property type="match status" value="1"/>
</dbReference>
<dbReference type="Pfam" id="PF00596">
    <property type="entry name" value="Aldolase_II"/>
    <property type="match status" value="1"/>
</dbReference>
<dbReference type="SMART" id="SM01007">
    <property type="entry name" value="Aldolase_II"/>
    <property type="match status" value="1"/>
</dbReference>
<dbReference type="SUPFAM" id="SSF53639">
    <property type="entry name" value="AraD/HMP-PK domain-like"/>
    <property type="match status" value="1"/>
</dbReference>
<comment type="function">
    <text evidence="1">Catalyzes the dehydration of methylthioribulose-1-phosphate (MTRu-1-P) into 2,3-diketo-5-methylthiopentyl-1-phosphate (DK-MTP-1-P).</text>
</comment>
<comment type="catalytic activity">
    <reaction evidence="1">
        <text>5-(methylsulfanyl)-D-ribulose 1-phosphate = 5-methylsulfanyl-2,3-dioxopentyl phosphate + H2O</text>
        <dbReference type="Rhea" id="RHEA:15549"/>
        <dbReference type="ChEBI" id="CHEBI:15377"/>
        <dbReference type="ChEBI" id="CHEBI:58548"/>
        <dbReference type="ChEBI" id="CHEBI:58828"/>
        <dbReference type="EC" id="4.2.1.109"/>
    </reaction>
</comment>
<comment type="cofactor">
    <cofactor evidence="1">
        <name>Zn(2+)</name>
        <dbReference type="ChEBI" id="CHEBI:29105"/>
    </cofactor>
    <text evidence="1">Binds 1 zinc ion per subunit.</text>
</comment>
<comment type="pathway">
    <text evidence="1">Amino-acid biosynthesis; L-methionine biosynthesis via salvage pathway; L-methionine from S-methyl-5-thio-alpha-D-ribose 1-phosphate: step 2/6.</text>
</comment>
<comment type="similarity">
    <text evidence="1">Belongs to the aldolase class II family. MtnB subfamily.</text>
</comment>
<evidence type="ECO:0000255" key="1">
    <source>
        <dbReference type="HAMAP-Rule" id="MF_01677"/>
    </source>
</evidence>
<keyword id="KW-0028">Amino-acid biosynthesis</keyword>
<keyword id="KW-0456">Lyase</keyword>
<keyword id="KW-0479">Metal-binding</keyword>
<keyword id="KW-0486">Methionine biosynthesis</keyword>
<keyword id="KW-0862">Zinc</keyword>
<reference key="1">
    <citation type="journal article" date="2005" name="Jpn. Agric. Res. Q.">
        <title>Genome sequence of Xanthomonas oryzae pv. oryzae suggests contribution of large numbers of effector genes and insertion sequences to its race diversity.</title>
        <authorList>
            <person name="Ochiai H."/>
            <person name="Inoue Y."/>
            <person name="Takeya M."/>
            <person name="Sasaki A."/>
            <person name="Kaku H."/>
        </authorList>
    </citation>
    <scope>NUCLEOTIDE SEQUENCE [LARGE SCALE GENOMIC DNA]</scope>
    <source>
        <strain>MAFF 311018</strain>
    </source>
</reference>
<gene>
    <name evidence="1" type="primary">mtnB</name>
    <name type="ordered locus">XOO2008</name>
</gene>
<accession>Q2P3W4</accession>
<name>MTNB_XANOM</name>
<feature type="chain" id="PRO_0000357116" description="Methylthioribulose-1-phosphate dehydratase">
    <location>
        <begin position="1"/>
        <end position="225"/>
    </location>
</feature>
<feature type="binding site" evidence="1">
    <location>
        <position position="106"/>
    </location>
    <ligand>
        <name>Zn(2+)</name>
        <dbReference type="ChEBI" id="CHEBI:29105"/>
    </ligand>
</feature>
<feature type="binding site" evidence="1">
    <location>
        <position position="108"/>
    </location>
    <ligand>
        <name>Zn(2+)</name>
        <dbReference type="ChEBI" id="CHEBI:29105"/>
    </ligand>
</feature>